<feature type="chain" id="PRO_0000303814" description="Exodeoxyribonuclease 7 large subunit">
    <location>
        <begin position="1"/>
        <end position="519"/>
    </location>
</feature>
<feature type="region of interest" description="Disordered" evidence="2">
    <location>
        <begin position="500"/>
        <end position="519"/>
    </location>
</feature>
<name>EX7L_CERS4</name>
<dbReference type="EC" id="3.1.11.6" evidence="1"/>
<dbReference type="EMBL" id="CP000143">
    <property type="protein sequence ID" value="ABA77994.1"/>
    <property type="molecule type" value="Genomic_DNA"/>
</dbReference>
<dbReference type="RefSeq" id="WP_011337024.1">
    <property type="nucleotide sequence ID" value="NC_007493.2"/>
</dbReference>
<dbReference type="RefSeq" id="YP_351895.1">
    <property type="nucleotide sequence ID" value="NC_007493.2"/>
</dbReference>
<dbReference type="SMR" id="Q3J5E0"/>
<dbReference type="STRING" id="272943.RSP_1845"/>
<dbReference type="EnsemblBacteria" id="ABA77994">
    <property type="protein sequence ID" value="ABA77994"/>
    <property type="gene ID" value="RSP_1845"/>
</dbReference>
<dbReference type="GeneID" id="3719112"/>
<dbReference type="KEGG" id="rsp:RSP_1845"/>
<dbReference type="PATRIC" id="fig|272943.9.peg.732"/>
<dbReference type="eggNOG" id="COG1570">
    <property type="taxonomic scope" value="Bacteria"/>
</dbReference>
<dbReference type="OrthoDB" id="9802795at2"/>
<dbReference type="PhylomeDB" id="Q3J5E0"/>
<dbReference type="Proteomes" id="UP000002703">
    <property type="component" value="Chromosome 1"/>
</dbReference>
<dbReference type="GO" id="GO:0005737">
    <property type="term" value="C:cytoplasm"/>
    <property type="evidence" value="ECO:0007669"/>
    <property type="project" value="UniProtKB-SubCell"/>
</dbReference>
<dbReference type="GO" id="GO:0009318">
    <property type="term" value="C:exodeoxyribonuclease VII complex"/>
    <property type="evidence" value="ECO:0007669"/>
    <property type="project" value="InterPro"/>
</dbReference>
<dbReference type="GO" id="GO:0008855">
    <property type="term" value="F:exodeoxyribonuclease VII activity"/>
    <property type="evidence" value="ECO:0007669"/>
    <property type="project" value="UniProtKB-UniRule"/>
</dbReference>
<dbReference type="GO" id="GO:0003676">
    <property type="term" value="F:nucleic acid binding"/>
    <property type="evidence" value="ECO:0007669"/>
    <property type="project" value="InterPro"/>
</dbReference>
<dbReference type="GO" id="GO:0006308">
    <property type="term" value="P:DNA catabolic process"/>
    <property type="evidence" value="ECO:0007669"/>
    <property type="project" value="UniProtKB-UniRule"/>
</dbReference>
<dbReference type="CDD" id="cd04489">
    <property type="entry name" value="ExoVII_LU_OBF"/>
    <property type="match status" value="1"/>
</dbReference>
<dbReference type="HAMAP" id="MF_00378">
    <property type="entry name" value="Exonuc_7_L"/>
    <property type="match status" value="1"/>
</dbReference>
<dbReference type="InterPro" id="IPR003753">
    <property type="entry name" value="Exonuc_VII_L"/>
</dbReference>
<dbReference type="InterPro" id="IPR020579">
    <property type="entry name" value="Exonuc_VII_lsu_C"/>
</dbReference>
<dbReference type="InterPro" id="IPR025824">
    <property type="entry name" value="OB-fold_nuc-bd_dom"/>
</dbReference>
<dbReference type="NCBIfam" id="TIGR00237">
    <property type="entry name" value="xseA"/>
    <property type="match status" value="1"/>
</dbReference>
<dbReference type="PANTHER" id="PTHR30008">
    <property type="entry name" value="EXODEOXYRIBONUCLEASE 7 LARGE SUBUNIT"/>
    <property type="match status" value="1"/>
</dbReference>
<dbReference type="PANTHER" id="PTHR30008:SF0">
    <property type="entry name" value="EXODEOXYRIBONUCLEASE 7 LARGE SUBUNIT"/>
    <property type="match status" value="1"/>
</dbReference>
<dbReference type="Pfam" id="PF02601">
    <property type="entry name" value="Exonuc_VII_L"/>
    <property type="match status" value="2"/>
</dbReference>
<dbReference type="Pfam" id="PF13742">
    <property type="entry name" value="tRNA_anti_2"/>
    <property type="match status" value="1"/>
</dbReference>
<evidence type="ECO:0000255" key="1">
    <source>
        <dbReference type="HAMAP-Rule" id="MF_00378"/>
    </source>
</evidence>
<evidence type="ECO:0000256" key="2">
    <source>
        <dbReference type="SAM" id="MobiDB-lite"/>
    </source>
</evidence>
<proteinExistence type="inferred from homology"/>
<organism>
    <name type="scientific">Cereibacter sphaeroides (strain ATCC 17023 / DSM 158 / JCM 6121 / CCUG 31486 / LMG 2827 / NBRC 12203 / NCIMB 8253 / ATH 2.4.1.)</name>
    <name type="common">Rhodobacter sphaeroides</name>
    <dbReference type="NCBI Taxonomy" id="272943"/>
    <lineage>
        <taxon>Bacteria</taxon>
        <taxon>Pseudomonadati</taxon>
        <taxon>Pseudomonadota</taxon>
        <taxon>Alphaproteobacteria</taxon>
        <taxon>Rhodobacterales</taxon>
        <taxon>Paracoccaceae</taxon>
        <taxon>Cereibacter</taxon>
    </lineage>
</organism>
<accession>Q3J5E0</accession>
<protein>
    <recommendedName>
        <fullName evidence="1">Exodeoxyribonuclease 7 large subunit</fullName>
        <ecNumber evidence="1">3.1.11.6</ecNumber>
    </recommendedName>
    <alternativeName>
        <fullName evidence="1">Exodeoxyribonuclease VII large subunit</fullName>
        <shortName evidence="1">Exonuclease VII large subunit</shortName>
    </alternativeName>
</protein>
<comment type="function">
    <text evidence="1">Bidirectionally degrades single-stranded DNA into large acid-insoluble oligonucleotides, which are then degraded further into small acid-soluble oligonucleotides.</text>
</comment>
<comment type="catalytic activity">
    <reaction evidence="1">
        <text>Exonucleolytic cleavage in either 5'- to 3'- or 3'- to 5'-direction to yield nucleoside 5'-phosphates.</text>
        <dbReference type="EC" id="3.1.11.6"/>
    </reaction>
</comment>
<comment type="subunit">
    <text evidence="1">Heterooligomer composed of large and small subunits.</text>
</comment>
<comment type="subcellular location">
    <subcellularLocation>
        <location evidence="1">Cytoplasm</location>
    </subcellularLocation>
</comment>
<comment type="similarity">
    <text evidence="1">Belongs to the XseA family.</text>
</comment>
<reference key="1">
    <citation type="submission" date="2005-09" db="EMBL/GenBank/DDBJ databases">
        <title>Complete sequence of chromosome 1 of Rhodobacter sphaeroides 2.4.1.</title>
        <authorList>
            <person name="Copeland A."/>
            <person name="Lucas S."/>
            <person name="Lapidus A."/>
            <person name="Barry K."/>
            <person name="Detter J.C."/>
            <person name="Glavina T."/>
            <person name="Hammon N."/>
            <person name="Israni S."/>
            <person name="Pitluck S."/>
            <person name="Richardson P."/>
            <person name="Mackenzie C."/>
            <person name="Choudhary M."/>
            <person name="Larimer F."/>
            <person name="Hauser L.J."/>
            <person name="Land M."/>
            <person name="Donohue T.J."/>
            <person name="Kaplan S."/>
        </authorList>
    </citation>
    <scope>NUCLEOTIDE SEQUENCE [LARGE SCALE GENOMIC DNA]</scope>
    <source>
        <strain>ATCC 17023 / DSM 158 / JCM 6121 / CCUG 31486 / LMG 2827 / NBRC 12203 / NCIMB 8253 / ATH 2.4.1.</strain>
    </source>
</reference>
<sequence>MSDLFEDPAPSRNTPEFTVSELSGAVKRVIEGEFGLVRVRGEIGRVSRPASGHLYFDLKDDRAVMAAICWKGQAGRLSVRPEEGMEVVATGRMTTFPGQSKYQIIVEDMAPAGAGALMAMLEKRRAALAAEGLFDAARKHPLPFLPRVIGVVTSPSGAVIRDILHRLRDRFPSHVLIWPVAVQGEKCAPEVAAAIRGFNALPEGGPIPRPDLLIVARGGGSLEDLWGFNEEIVVRAAAESRIPLISAVGHETDTTLIDHAADRRAPTPTAAAEMAVPVRLELLAGLDGQVARLSRCAAETIRRRDQRLRDLARALPRLESLVAGPSQRFDLWSGRLSGALGQSVAARRARLEPLGAHLRPRLLADLVARQKDRLGDRTRSLETCLGRRAERARDRFDALSARLAPAFARLIAETERATRRDAATLGTLAARLDAAPEARLARLSDRLEALDRLRQTLGYRETLKRGYAVVRADGAVLTTKAEAGAAAMLEIEFQDGRLSVGRGKTRKPKEEPPAQGSLL</sequence>
<gene>
    <name evidence="1" type="primary">xseA</name>
    <name type="ordered locus">RHOS4_04260</name>
    <name type="ORF">RSP_1845</name>
</gene>
<keyword id="KW-0963">Cytoplasm</keyword>
<keyword id="KW-0269">Exonuclease</keyword>
<keyword id="KW-0378">Hydrolase</keyword>
<keyword id="KW-0540">Nuclease</keyword>
<keyword id="KW-1185">Reference proteome</keyword>